<feature type="chain" id="PRO_0000169951" description="Citrate synthase">
    <location>
        <begin position="1"/>
        <end position="375"/>
    </location>
</feature>
<feature type="active site" evidence="1">
    <location>
        <position position="266"/>
    </location>
</feature>
<feature type="active site" evidence="1">
    <location>
        <position position="317"/>
    </location>
</feature>
<evidence type="ECO:0000255" key="1">
    <source>
        <dbReference type="PROSITE-ProRule" id="PRU10117"/>
    </source>
</evidence>
<evidence type="ECO:0000305" key="2"/>
<gene>
    <name type="primary">gltA</name>
</gene>
<proteinExistence type="inferred from homology"/>
<comment type="catalytic activity">
    <reaction evidence="1">
        <text>oxaloacetate + acetyl-CoA + H2O = citrate + CoA + H(+)</text>
        <dbReference type="Rhea" id="RHEA:16845"/>
        <dbReference type="ChEBI" id="CHEBI:15377"/>
        <dbReference type="ChEBI" id="CHEBI:15378"/>
        <dbReference type="ChEBI" id="CHEBI:16452"/>
        <dbReference type="ChEBI" id="CHEBI:16947"/>
        <dbReference type="ChEBI" id="CHEBI:57287"/>
        <dbReference type="ChEBI" id="CHEBI:57288"/>
        <dbReference type="EC" id="2.3.3.16"/>
    </reaction>
</comment>
<comment type="activity regulation">
    <text>Allosterically inhibited by NADH.</text>
</comment>
<comment type="pathway">
    <text>Carbohydrate metabolism; tricarboxylic acid cycle; isocitrate from oxaloacetate: step 1/2.</text>
</comment>
<comment type="subunit">
    <text>Homohexamer.</text>
</comment>
<comment type="miscellaneous">
    <text>Citrate synthase is found in nearly all cells capable of oxidative metabolism.</text>
</comment>
<comment type="similarity">
    <text evidence="2">Belongs to the citrate synthase family.</text>
</comment>
<keyword id="KW-0021">Allosteric enzyme</keyword>
<keyword id="KW-0808">Transferase</keyword>
<keyword id="KW-0816">Tricarboxylic acid cycle</keyword>
<accession>P26491</accession>
<reference key="1">
    <citation type="journal article" date="1991" name="Biochem. J.">
        <title>Citrate synthase from Mycobacterium smegmatis. Cloning, sequence determination and expression in Escherichia coli.</title>
        <authorList>
            <person name="David M."/>
            <person name="Lubinsky-Mink S."/>
            <person name="Benzvi A."/>
            <person name="Suissa M."/>
            <person name="Unitzur S."/>
            <person name="Kuhn J.C."/>
        </authorList>
    </citation>
    <scope>NUCLEOTIDE SEQUENCE [GENOMIC DNA]</scope>
    <source>
        <strain>ATCC 607 / DSM 43465 / JCM 20379 / NBRC 3207 / NRRL B-692</strain>
    </source>
</reference>
<dbReference type="EC" id="2.3.3.16"/>
<dbReference type="EMBL" id="X60513">
    <property type="protein sequence ID" value="CAA43028.1"/>
    <property type="molecule type" value="Genomic_DNA"/>
</dbReference>
<dbReference type="PIR" id="S17168">
    <property type="entry name" value="YKMY"/>
</dbReference>
<dbReference type="SMR" id="P26491"/>
<dbReference type="UniPathway" id="UPA00223">
    <property type="reaction ID" value="UER00717"/>
</dbReference>
<dbReference type="GO" id="GO:0005829">
    <property type="term" value="C:cytosol"/>
    <property type="evidence" value="ECO:0007669"/>
    <property type="project" value="TreeGrafter"/>
</dbReference>
<dbReference type="GO" id="GO:0004108">
    <property type="term" value="F:citrate (Si)-synthase activity"/>
    <property type="evidence" value="ECO:0007669"/>
    <property type="project" value="TreeGrafter"/>
</dbReference>
<dbReference type="GO" id="GO:0005975">
    <property type="term" value="P:carbohydrate metabolic process"/>
    <property type="evidence" value="ECO:0007669"/>
    <property type="project" value="TreeGrafter"/>
</dbReference>
<dbReference type="GO" id="GO:0006099">
    <property type="term" value="P:tricarboxylic acid cycle"/>
    <property type="evidence" value="ECO:0007669"/>
    <property type="project" value="UniProtKB-UniPathway"/>
</dbReference>
<dbReference type="CDD" id="cd06111">
    <property type="entry name" value="DsCS_like"/>
    <property type="match status" value="1"/>
</dbReference>
<dbReference type="FunFam" id="1.10.230.10:FF:000003">
    <property type="entry name" value="Citrate synthase"/>
    <property type="match status" value="1"/>
</dbReference>
<dbReference type="Gene3D" id="1.10.580.10">
    <property type="entry name" value="Citrate Synthase, domain 1"/>
    <property type="match status" value="1"/>
</dbReference>
<dbReference type="Gene3D" id="1.10.230.10">
    <property type="entry name" value="Cytochrome P450-Terp, domain 2"/>
    <property type="match status" value="1"/>
</dbReference>
<dbReference type="InterPro" id="IPR011278">
    <property type="entry name" value="2-MeCitrate/Citrate_synth_II"/>
</dbReference>
<dbReference type="InterPro" id="IPR016142">
    <property type="entry name" value="Citrate_synth-like_lrg_a-sub"/>
</dbReference>
<dbReference type="InterPro" id="IPR016143">
    <property type="entry name" value="Citrate_synth-like_sm_a-sub"/>
</dbReference>
<dbReference type="InterPro" id="IPR002020">
    <property type="entry name" value="Citrate_synthase"/>
</dbReference>
<dbReference type="InterPro" id="IPR019810">
    <property type="entry name" value="Citrate_synthase_AS"/>
</dbReference>
<dbReference type="InterPro" id="IPR024176">
    <property type="entry name" value="Citrate_synthase_bac-typ"/>
</dbReference>
<dbReference type="InterPro" id="IPR036969">
    <property type="entry name" value="Citrate_synthase_sf"/>
</dbReference>
<dbReference type="NCBIfam" id="TIGR01800">
    <property type="entry name" value="cit_synth_II"/>
    <property type="match status" value="1"/>
</dbReference>
<dbReference type="NCBIfam" id="NF010636">
    <property type="entry name" value="PRK14033.1"/>
    <property type="match status" value="1"/>
</dbReference>
<dbReference type="PANTHER" id="PTHR11739">
    <property type="entry name" value="CITRATE SYNTHASE"/>
    <property type="match status" value="1"/>
</dbReference>
<dbReference type="PANTHER" id="PTHR11739:SF4">
    <property type="entry name" value="CITRATE SYNTHASE, PEROXISOMAL"/>
    <property type="match status" value="1"/>
</dbReference>
<dbReference type="Pfam" id="PF00285">
    <property type="entry name" value="Citrate_synt"/>
    <property type="match status" value="1"/>
</dbReference>
<dbReference type="PIRSF" id="PIRSF001369">
    <property type="entry name" value="Citrate_synth"/>
    <property type="match status" value="1"/>
</dbReference>
<dbReference type="PRINTS" id="PR00143">
    <property type="entry name" value="CITRTSNTHASE"/>
</dbReference>
<dbReference type="SUPFAM" id="SSF48256">
    <property type="entry name" value="Citrate synthase"/>
    <property type="match status" value="1"/>
</dbReference>
<dbReference type="PROSITE" id="PS00480">
    <property type="entry name" value="CITRATE_SYNTHASE"/>
    <property type="match status" value="1"/>
</dbReference>
<organism>
    <name type="scientific">Mycolicibacterium smegmatis</name>
    <name type="common">Mycobacterium smegmatis</name>
    <dbReference type="NCBI Taxonomy" id="1772"/>
    <lineage>
        <taxon>Bacteria</taxon>
        <taxon>Bacillati</taxon>
        <taxon>Actinomycetota</taxon>
        <taxon>Actinomycetes</taxon>
        <taxon>Mycobacteriales</taxon>
        <taxon>Mycobacteriaceae</taxon>
        <taxon>Mycolicibacterium</taxon>
    </lineage>
</organism>
<sequence>MTTATESEAPRIHKGLAGVVVDTTAISKVVPETNSLTYRGYPVQDLAAQCSFEQVAYLLWHGELPTDQLALFSQRERASRRIDRSMQALLAKLPDNCHPMDVVRTAISYLGAEDLEEDVDTAEANYAKSLRMFAVLPTIVATDIRRRQGLTPIPPHSQLGYAQNFLNMCFGEVPEPVVVRAFEQSMVLYAEHSFNASTFAARVVTSTQSDIYSAVTAAIGALKGSLHGGANEAVMHDMLEIGSAEKAPEWLHGKLSRKEKVMGFGHRVYKNGDSRVPTMKVALEQVAQVRDGQRWLDIYNTLESAMFAATRIKPNLDFPTGPAYYLMDFPIESFTPLFVMSRITGWTAHIMEQAASNALIRPLSEYSGQPQRSLV</sequence>
<name>CISY_MYCSM</name>
<protein>
    <recommendedName>
        <fullName>Citrate synthase</fullName>
        <ecNumber>2.3.3.16</ecNumber>
    </recommendedName>
</protein>